<accession>Q1MQP6</accession>
<keyword id="KW-0378">Hydrolase</keyword>
<keyword id="KW-0441">Lipid A biosynthesis</keyword>
<keyword id="KW-0444">Lipid biosynthesis</keyword>
<keyword id="KW-0443">Lipid metabolism</keyword>
<keyword id="KW-0479">Metal-binding</keyword>
<keyword id="KW-1185">Reference proteome</keyword>
<keyword id="KW-0862">Zinc</keyword>
<protein>
    <recommendedName>
        <fullName evidence="1">UDP-3-O-acyl-N-acetylglucosamine deacetylase</fullName>
        <shortName evidence="1">UDP-3-O-acyl-GlcNAc deacetylase</shortName>
        <ecNumber evidence="1">3.5.1.108</ecNumber>
    </recommendedName>
    <alternativeName>
        <fullName evidence="1">UDP-3-O-[R-3-hydroxymyristoyl]-N-acetylglucosamine deacetylase</fullName>
    </alternativeName>
</protein>
<sequence>MQQTTIQRSITFSGIGVHSGQCLNVTLHPASENTGIVFEVITGDTRHTLIPSPSAVIATKLATTIGNKNITISTVEHLLASIRGLEIDNIRICVEGAEIPIMDGSAKIFTNELLQAGIKYLPATKKILQVIKPVEFIKGEKRIRALPYNGFKLDYTINYIHPIIGHQRLVLDVTPTTFLSIANARTYGFLKDVEQMLKNGLAQGGSLENAIVLDSTKVINPEGLRYPDEFVRHKALDFIGDMAMMHLPLQGYFEIYCSGHQHNNQFLHKLQDENALALVTLEGEKTQNLYQNITPLYNDVLALL</sequence>
<evidence type="ECO:0000255" key="1">
    <source>
        <dbReference type="HAMAP-Rule" id="MF_00388"/>
    </source>
</evidence>
<gene>
    <name evidence="1" type="primary">lpxC</name>
    <name type="ordered locus">LI0627</name>
</gene>
<name>LPXC_LAWIP</name>
<dbReference type="EC" id="3.5.1.108" evidence="1"/>
<dbReference type="EMBL" id="AM180252">
    <property type="protein sequence ID" value="CAJ54681.1"/>
    <property type="molecule type" value="Genomic_DNA"/>
</dbReference>
<dbReference type="RefSeq" id="WP_011526710.1">
    <property type="nucleotide sequence ID" value="NC_008011.1"/>
</dbReference>
<dbReference type="SMR" id="Q1MQP6"/>
<dbReference type="STRING" id="363253.LI0627"/>
<dbReference type="KEGG" id="lip:LI0627"/>
<dbReference type="eggNOG" id="COG0774">
    <property type="taxonomic scope" value="Bacteria"/>
</dbReference>
<dbReference type="HOGENOM" id="CLU_046528_1_0_7"/>
<dbReference type="OrthoDB" id="9802746at2"/>
<dbReference type="UniPathway" id="UPA00359">
    <property type="reaction ID" value="UER00478"/>
</dbReference>
<dbReference type="Proteomes" id="UP000002430">
    <property type="component" value="Chromosome"/>
</dbReference>
<dbReference type="GO" id="GO:0016020">
    <property type="term" value="C:membrane"/>
    <property type="evidence" value="ECO:0007669"/>
    <property type="project" value="GOC"/>
</dbReference>
<dbReference type="GO" id="GO:0046872">
    <property type="term" value="F:metal ion binding"/>
    <property type="evidence" value="ECO:0007669"/>
    <property type="project" value="UniProtKB-KW"/>
</dbReference>
<dbReference type="GO" id="GO:0103117">
    <property type="term" value="F:UDP-3-O-acyl-N-acetylglucosamine deacetylase activity"/>
    <property type="evidence" value="ECO:0007669"/>
    <property type="project" value="UniProtKB-UniRule"/>
</dbReference>
<dbReference type="GO" id="GO:0009245">
    <property type="term" value="P:lipid A biosynthetic process"/>
    <property type="evidence" value="ECO:0007669"/>
    <property type="project" value="UniProtKB-UniRule"/>
</dbReference>
<dbReference type="Gene3D" id="3.30.230.20">
    <property type="entry name" value="lpxc deacetylase, domain 1"/>
    <property type="match status" value="1"/>
</dbReference>
<dbReference type="Gene3D" id="3.30.1700.10">
    <property type="entry name" value="lpxc deacetylase, domain 2"/>
    <property type="match status" value="1"/>
</dbReference>
<dbReference type="HAMAP" id="MF_00388">
    <property type="entry name" value="LpxC"/>
    <property type="match status" value="1"/>
</dbReference>
<dbReference type="InterPro" id="IPR020568">
    <property type="entry name" value="Ribosomal_Su5_D2-typ_SF"/>
</dbReference>
<dbReference type="InterPro" id="IPR004463">
    <property type="entry name" value="UDP-acyl_GlcNac_deAcase"/>
</dbReference>
<dbReference type="InterPro" id="IPR011334">
    <property type="entry name" value="UDP-acyl_GlcNac_deAcase_C"/>
</dbReference>
<dbReference type="InterPro" id="IPR015870">
    <property type="entry name" value="UDP-acyl_N-AcGlcN_deAcase_N"/>
</dbReference>
<dbReference type="NCBIfam" id="TIGR00325">
    <property type="entry name" value="lpxC"/>
    <property type="match status" value="1"/>
</dbReference>
<dbReference type="PANTHER" id="PTHR33694">
    <property type="entry name" value="UDP-3-O-ACYL-N-ACETYLGLUCOSAMINE DEACETYLASE 1, MITOCHONDRIAL-RELATED"/>
    <property type="match status" value="1"/>
</dbReference>
<dbReference type="PANTHER" id="PTHR33694:SF1">
    <property type="entry name" value="UDP-3-O-ACYL-N-ACETYLGLUCOSAMINE DEACETYLASE 1, MITOCHONDRIAL-RELATED"/>
    <property type="match status" value="1"/>
</dbReference>
<dbReference type="Pfam" id="PF03331">
    <property type="entry name" value="LpxC"/>
    <property type="match status" value="1"/>
</dbReference>
<dbReference type="SUPFAM" id="SSF54211">
    <property type="entry name" value="Ribosomal protein S5 domain 2-like"/>
    <property type="match status" value="2"/>
</dbReference>
<feature type="chain" id="PRO_1000122797" description="UDP-3-O-acyl-N-acetylglucosamine deacetylase">
    <location>
        <begin position="1"/>
        <end position="304"/>
    </location>
</feature>
<feature type="active site" description="Proton donor" evidence="1">
    <location>
        <position position="260"/>
    </location>
</feature>
<feature type="binding site" evidence="1">
    <location>
        <position position="77"/>
    </location>
    <ligand>
        <name>Zn(2+)</name>
        <dbReference type="ChEBI" id="CHEBI:29105"/>
    </ligand>
</feature>
<feature type="binding site" evidence="1">
    <location>
        <position position="233"/>
    </location>
    <ligand>
        <name>Zn(2+)</name>
        <dbReference type="ChEBI" id="CHEBI:29105"/>
    </ligand>
</feature>
<feature type="binding site" evidence="1">
    <location>
        <position position="237"/>
    </location>
    <ligand>
        <name>Zn(2+)</name>
        <dbReference type="ChEBI" id="CHEBI:29105"/>
    </ligand>
</feature>
<reference key="1">
    <citation type="submission" date="2005-11" db="EMBL/GenBank/DDBJ databases">
        <title>The complete genome sequence of Lawsonia intracellularis: the causative agent of proliferative enteropathy.</title>
        <authorList>
            <person name="Kaur K."/>
            <person name="Zhang Q."/>
            <person name="Beckler D."/>
            <person name="Munir S."/>
            <person name="Li L."/>
            <person name="Kinsley K."/>
            <person name="Herron L."/>
            <person name="Peterson A."/>
            <person name="May B."/>
            <person name="Singh S."/>
            <person name="Gebhart C."/>
            <person name="Kapur V."/>
        </authorList>
    </citation>
    <scope>NUCLEOTIDE SEQUENCE [LARGE SCALE GENOMIC DNA]</scope>
    <source>
        <strain>PHE/MN1-00</strain>
    </source>
</reference>
<comment type="function">
    <text evidence="1">Catalyzes the hydrolysis of UDP-3-O-myristoyl-N-acetylglucosamine to form UDP-3-O-myristoylglucosamine and acetate, the committed step in lipid A biosynthesis.</text>
</comment>
<comment type="catalytic activity">
    <reaction evidence="1">
        <text>a UDP-3-O-[(3R)-3-hydroxyacyl]-N-acetyl-alpha-D-glucosamine + H2O = a UDP-3-O-[(3R)-3-hydroxyacyl]-alpha-D-glucosamine + acetate</text>
        <dbReference type="Rhea" id="RHEA:67816"/>
        <dbReference type="ChEBI" id="CHEBI:15377"/>
        <dbReference type="ChEBI" id="CHEBI:30089"/>
        <dbReference type="ChEBI" id="CHEBI:137740"/>
        <dbReference type="ChEBI" id="CHEBI:173225"/>
        <dbReference type="EC" id="3.5.1.108"/>
    </reaction>
</comment>
<comment type="cofactor">
    <cofactor evidence="1">
        <name>Zn(2+)</name>
        <dbReference type="ChEBI" id="CHEBI:29105"/>
    </cofactor>
</comment>
<comment type="pathway">
    <text evidence="1">Glycolipid biosynthesis; lipid IV(A) biosynthesis; lipid IV(A) from (3R)-3-hydroxytetradecanoyl-[acyl-carrier-protein] and UDP-N-acetyl-alpha-D-glucosamine: step 2/6.</text>
</comment>
<comment type="similarity">
    <text evidence="1">Belongs to the LpxC family.</text>
</comment>
<organism>
    <name type="scientific">Lawsonia intracellularis (strain PHE/MN1-00)</name>
    <dbReference type="NCBI Taxonomy" id="363253"/>
    <lineage>
        <taxon>Bacteria</taxon>
        <taxon>Pseudomonadati</taxon>
        <taxon>Thermodesulfobacteriota</taxon>
        <taxon>Desulfovibrionia</taxon>
        <taxon>Desulfovibrionales</taxon>
        <taxon>Desulfovibrionaceae</taxon>
        <taxon>Lawsonia</taxon>
    </lineage>
</organism>
<proteinExistence type="inferred from homology"/>